<comment type="function">
    <text evidence="1">Catalyzes the formation of S-adenosylmethionine (AdoMet) from methionine and ATP. The overall synthetic reaction is composed of two sequential steps, AdoMet formation and the subsequent tripolyphosphate hydrolysis which occurs prior to release of AdoMet from the enzyme.</text>
</comment>
<comment type="catalytic activity">
    <reaction evidence="1">
        <text>L-methionine + ATP + H2O = S-adenosyl-L-methionine + phosphate + diphosphate</text>
        <dbReference type="Rhea" id="RHEA:21080"/>
        <dbReference type="ChEBI" id="CHEBI:15377"/>
        <dbReference type="ChEBI" id="CHEBI:30616"/>
        <dbReference type="ChEBI" id="CHEBI:33019"/>
        <dbReference type="ChEBI" id="CHEBI:43474"/>
        <dbReference type="ChEBI" id="CHEBI:57844"/>
        <dbReference type="ChEBI" id="CHEBI:59789"/>
        <dbReference type="EC" id="2.5.1.6"/>
    </reaction>
</comment>
<comment type="cofactor">
    <cofactor evidence="1">
        <name>Mg(2+)</name>
        <dbReference type="ChEBI" id="CHEBI:18420"/>
    </cofactor>
    <text evidence="1">Binds 2 divalent ions per subunit.</text>
</comment>
<comment type="cofactor">
    <cofactor evidence="1">
        <name>K(+)</name>
        <dbReference type="ChEBI" id="CHEBI:29103"/>
    </cofactor>
    <text evidence="1">Binds 1 potassium ion per subunit.</text>
</comment>
<comment type="pathway">
    <text evidence="1">Amino-acid biosynthesis; S-adenosyl-L-methionine biosynthesis; S-adenosyl-L-methionine from L-methionine: step 1/1.</text>
</comment>
<comment type="subunit">
    <text evidence="1">Homotetramer; dimer of dimers.</text>
</comment>
<comment type="subcellular location">
    <subcellularLocation>
        <location evidence="1">Cytoplasm</location>
    </subcellularLocation>
</comment>
<comment type="similarity">
    <text evidence="1">Belongs to the AdoMet synthase family.</text>
</comment>
<gene>
    <name evidence="1" type="primary">metK</name>
    <name type="ordered locus">Jann_0706</name>
</gene>
<name>METK_JANSC</name>
<accession>Q28UI9</accession>
<protein>
    <recommendedName>
        <fullName evidence="1">S-adenosylmethionine synthase</fullName>
        <shortName evidence="1">AdoMet synthase</shortName>
        <ecNumber evidence="1">2.5.1.6</ecNumber>
    </recommendedName>
    <alternativeName>
        <fullName evidence="1">MAT</fullName>
    </alternativeName>
    <alternativeName>
        <fullName evidence="1">Methionine adenosyltransferase</fullName>
    </alternativeName>
</protein>
<organism>
    <name type="scientific">Jannaschia sp. (strain CCS1)</name>
    <dbReference type="NCBI Taxonomy" id="290400"/>
    <lineage>
        <taxon>Bacteria</taxon>
        <taxon>Pseudomonadati</taxon>
        <taxon>Pseudomonadota</taxon>
        <taxon>Alphaproteobacteria</taxon>
        <taxon>Rhodobacterales</taxon>
        <taxon>Roseobacteraceae</taxon>
        <taxon>Jannaschia</taxon>
    </lineage>
</organism>
<keyword id="KW-0067">ATP-binding</keyword>
<keyword id="KW-0963">Cytoplasm</keyword>
<keyword id="KW-0460">Magnesium</keyword>
<keyword id="KW-0479">Metal-binding</keyword>
<keyword id="KW-0547">Nucleotide-binding</keyword>
<keyword id="KW-0554">One-carbon metabolism</keyword>
<keyword id="KW-0630">Potassium</keyword>
<keyword id="KW-1185">Reference proteome</keyword>
<keyword id="KW-0808">Transferase</keyword>
<proteinExistence type="inferred from homology"/>
<sequence>MARNNYLFTSESVSEGHPDKVCDRISDAILDAFLSEEPEARVACETFATTNRVVIGGEVGLSDQDKLAEYMGQVDPIVRACVKDIGYEQDKFHHETVEITNLLHEQSAHIAQGVDAAENKDEGAGDQGIMFGFAVAETPELMPAPIHYAHAILKKLAEVRKSGEQAVLGPDAKSQLSVRYEDGTPVGVSSIVLSTQHLDESLTSDDVRAIVEPYIRGELPDGWISAETEWHVNPTGKFVIGGPDGDAGLTGRKIIVDTYGGAAPHGGGAFSGKDPTKVDRSAAYASRYLAKNVVAAGLAHRCTIQLSYAIGVAKPLSIYCDTHQTGQVHEAEIERALGQVMDLTPRGIRTHLGMNRPIYERTAAYGHFGRAAEADGGFSWEKTDLADAIKAAL</sequence>
<dbReference type="EC" id="2.5.1.6" evidence="1"/>
<dbReference type="EMBL" id="CP000264">
    <property type="protein sequence ID" value="ABD53623.1"/>
    <property type="molecule type" value="Genomic_DNA"/>
</dbReference>
<dbReference type="RefSeq" id="WP_011453831.1">
    <property type="nucleotide sequence ID" value="NC_007802.1"/>
</dbReference>
<dbReference type="SMR" id="Q28UI9"/>
<dbReference type="STRING" id="290400.Jann_0706"/>
<dbReference type="KEGG" id="jan:Jann_0706"/>
<dbReference type="eggNOG" id="COG0192">
    <property type="taxonomic scope" value="Bacteria"/>
</dbReference>
<dbReference type="HOGENOM" id="CLU_041802_1_1_5"/>
<dbReference type="OrthoDB" id="9801686at2"/>
<dbReference type="UniPathway" id="UPA00315">
    <property type="reaction ID" value="UER00080"/>
</dbReference>
<dbReference type="Proteomes" id="UP000008326">
    <property type="component" value="Chromosome"/>
</dbReference>
<dbReference type="GO" id="GO:0005737">
    <property type="term" value="C:cytoplasm"/>
    <property type="evidence" value="ECO:0007669"/>
    <property type="project" value="UniProtKB-SubCell"/>
</dbReference>
<dbReference type="GO" id="GO:0005524">
    <property type="term" value="F:ATP binding"/>
    <property type="evidence" value="ECO:0007669"/>
    <property type="project" value="UniProtKB-UniRule"/>
</dbReference>
<dbReference type="GO" id="GO:0000287">
    <property type="term" value="F:magnesium ion binding"/>
    <property type="evidence" value="ECO:0007669"/>
    <property type="project" value="UniProtKB-UniRule"/>
</dbReference>
<dbReference type="GO" id="GO:0004478">
    <property type="term" value="F:methionine adenosyltransferase activity"/>
    <property type="evidence" value="ECO:0007669"/>
    <property type="project" value="UniProtKB-UniRule"/>
</dbReference>
<dbReference type="GO" id="GO:0006730">
    <property type="term" value="P:one-carbon metabolic process"/>
    <property type="evidence" value="ECO:0007669"/>
    <property type="project" value="UniProtKB-KW"/>
</dbReference>
<dbReference type="GO" id="GO:0006556">
    <property type="term" value="P:S-adenosylmethionine biosynthetic process"/>
    <property type="evidence" value="ECO:0007669"/>
    <property type="project" value="UniProtKB-UniRule"/>
</dbReference>
<dbReference type="CDD" id="cd18079">
    <property type="entry name" value="S-AdoMet_synt"/>
    <property type="match status" value="1"/>
</dbReference>
<dbReference type="FunFam" id="3.30.300.10:FF:000003">
    <property type="entry name" value="S-adenosylmethionine synthase"/>
    <property type="match status" value="1"/>
</dbReference>
<dbReference type="Gene3D" id="3.30.300.10">
    <property type="match status" value="3"/>
</dbReference>
<dbReference type="HAMAP" id="MF_00086">
    <property type="entry name" value="S_AdoMet_synth1"/>
    <property type="match status" value="1"/>
</dbReference>
<dbReference type="InterPro" id="IPR022631">
    <property type="entry name" value="ADOMET_SYNTHASE_CS"/>
</dbReference>
<dbReference type="InterPro" id="IPR022630">
    <property type="entry name" value="S-AdoMet_synt_C"/>
</dbReference>
<dbReference type="InterPro" id="IPR022629">
    <property type="entry name" value="S-AdoMet_synt_central"/>
</dbReference>
<dbReference type="InterPro" id="IPR022628">
    <property type="entry name" value="S-AdoMet_synt_N"/>
</dbReference>
<dbReference type="InterPro" id="IPR002133">
    <property type="entry name" value="S-AdoMet_synthetase"/>
</dbReference>
<dbReference type="InterPro" id="IPR022636">
    <property type="entry name" value="S-AdoMet_synthetase_sfam"/>
</dbReference>
<dbReference type="NCBIfam" id="TIGR01034">
    <property type="entry name" value="metK"/>
    <property type="match status" value="1"/>
</dbReference>
<dbReference type="PANTHER" id="PTHR11964">
    <property type="entry name" value="S-ADENOSYLMETHIONINE SYNTHETASE"/>
    <property type="match status" value="1"/>
</dbReference>
<dbReference type="Pfam" id="PF02773">
    <property type="entry name" value="S-AdoMet_synt_C"/>
    <property type="match status" value="1"/>
</dbReference>
<dbReference type="Pfam" id="PF02772">
    <property type="entry name" value="S-AdoMet_synt_M"/>
    <property type="match status" value="1"/>
</dbReference>
<dbReference type="Pfam" id="PF00438">
    <property type="entry name" value="S-AdoMet_synt_N"/>
    <property type="match status" value="1"/>
</dbReference>
<dbReference type="PIRSF" id="PIRSF000497">
    <property type="entry name" value="MAT"/>
    <property type="match status" value="1"/>
</dbReference>
<dbReference type="SUPFAM" id="SSF55973">
    <property type="entry name" value="S-adenosylmethionine synthetase"/>
    <property type="match status" value="3"/>
</dbReference>
<dbReference type="PROSITE" id="PS00376">
    <property type="entry name" value="ADOMET_SYNTHASE_1"/>
    <property type="match status" value="1"/>
</dbReference>
<dbReference type="PROSITE" id="PS00377">
    <property type="entry name" value="ADOMET_SYNTHASE_2"/>
    <property type="match status" value="1"/>
</dbReference>
<feature type="chain" id="PRO_0000241001" description="S-adenosylmethionine synthase">
    <location>
        <begin position="1"/>
        <end position="393"/>
    </location>
</feature>
<feature type="region of interest" description="Flexible loop" evidence="1">
    <location>
        <begin position="106"/>
        <end position="116"/>
    </location>
</feature>
<feature type="binding site" description="in other chain" evidence="1">
    <location>
        <position position="17"/>
    </location>
    <ligand>
        <name>ATP</name>
        <dbReference type="ChEBI" id="CHEBI:30616"/>
        <note>ligand shared between two neighboring subunits</note>
    </ligand>
</feature>
<feature type="binding site" evidence="1">
    <location>
        <position position="19"/>
    </location>
    <ligand>
        <name>Mg(2+)</name>
        <dbReference type="ChEBI" id="CHEBI:18420"/>
    </ligand>
</feature>
<feature type="binding site" evidence="1">
    <location>
        <position position="45"/>
    </location>
    <ligand>
        <name>K(+)</name>
        <dbReference type="ChEBI" id="CHEBI:29103"/>
    </ligand>
</feature>
<feature type="binding site" description="in other chain" evidence="1">
    <location>
        <position position="58"/>
    </location>
    <ligand>
        <name>L-methionine</name>
        <dbReference type="ChEBI" id="CHEBI:57844"/>
        <note>ligand shared between two neighboring subunits</note>
    </ligand>
</feature>
<feature type="binding site" description="in other chain" evidence="1">
    <location>
        <position position="106"/>
    </location>
    <ligand>
        <name>L-methionine</name>
        <dbReference type="ChEBI" id="CHEBI:57844"/>
        <note>ligand shared between two neighboring subunits</note>
    </ligand>
</feature>
<feature type="binding site" description="in other chain" evidence="1">
    <location>
        <begin position="171"/>
        <end position="173"/>
    </location>
    <ligand>
        <name>ATP</name>
        <dbReference type="ChEBI" id="CHEBI:30616"/>
        <note>ligand shared between two neighboring subunits</note>
    </ligand>
</feature>
<feature type="binding site" description="in other chain" evidence="1">
    <location>
        <begin position="237"/>
        <end position="238"/>
    </location>
    <ligand>
        <name>ATP</name>
        <dbReference type="ChEBI" id="CHEBI:30616"/>
        <note>ligand shared between two neighboring subunits</note>
    </ligand>
</feature>
<feature type="binding site" evidence="1">
    <location>
        <position position="246"/>
    </location>
    <ligand>
        <name>ATP</name>
        <dbReference type="ChEBI" id="CHEBI:30616"/>
        <note>ligand shared between two neighboring subunits</note>
    </ligand>
</feature>
<feature type="binding site" evidence="1">
    <location>
        <position position="246"/>
    </location>
    <ligand>
        <name>L-methionine</name>
        <dbReference type="ChEBI" id="CHEBI:57844"/>
        <note>ligand shared between two neighboring subunits</note>
    </ligand>
</feature>
<feature type="binding site" description="in other chain" evidence="1">
    <location>
        <begin position="252"/>
        <end position="253"/>
    </location>
    <ligand>
        <name>ATP</name>
        <dbReference type="ChEBI" id="CHEBI:30616"/>
        <note>ligand shared between two neighboring subunits</note>
    </ligand>
</feature>
<feature type="binding site" evidence="1">
    <location>
        <position position="269"/>
    </location>
    <ligand>
        <name>ATP</name>
        <dbReference type="ChEBI" id="CHEBI:30616"/>
        <note>ligand shared between two neighboring subunits</note>
    </ligand>
</feature>
<feature type="binding site" evidence="1">
    <location>
        <position position="273"/>
    </location>
    <ligand>
        <name>ATP</name>
        <dbReference type="ChEBI" id="CHEBI:30616"/>
        <note>ligand shared between two neighboring subunits</note>
    </ligand>
</feature>
<feature type="binding site" description="in other chain" evidence="1">
    <location>
        <position position="277"/>
    </location>
    <ligand>
        <name>L-methionine</name>
        <dbReference type="ChEBI" id="CHEBI:57844"/>
        <note>ligand shared between two neighboring subunits</note>
    </ligand>
</feature>
<reference key="1">
    <citation type="submission" date="2006-02" db="EMBL/GenBank/DDBJ databases">
        <title>Complete sequence of chromosome of Jannaschia sp. CCS1.</title>
        <authorList>
            <consortium name="US DOE Joint Genome Institute"/>
            <person name="Copeland A."/>
            <person name="Lucas S."/>
            <person name="Lapidus A."/>
            <person name="Barry K."/>
            <person name="Detter J.C."/>
            <person name="Glavina del Rio T."/>
            <person name="Hammon N."/>
            <person name="Israni S."/>
            <person name="Pitluck S."/>
            <person name="Brettin T."/>
            <person name="Bruce D."/>
            <person name="Han C."/>
            <person name="Tapia R."/>
            <person name="Gilna P."/>
            <person name="Chertkov O."/>
            <person name="Saunders E."/>
            <person name="Schmutz J."/>
            <person name="Larimer F."/>
            <person name="Land M."/>
            <person name="Kyrpides N."/>
            <person name="Lykidis A."/>
            <person name="Moran M.A."/>
            <person name="Belas R."/>
            <person name="Ye W."/>
            <person name="Buchan A."/>
            <person name="Gonzalez J.M."/>
            <person name="Schell M.A."/>
            <person name="Richardson P."/>
        </authorList>
    </citation>
    <scope>NUCLEOTIDE SEQUENCE [LARGE SCALE GENOMIC DNA]</scope>
    <source>
        <strain>CCS1</strain>
    </source>
</reference>
<evidence type="ECO:0000255" key="1">
    <source>
        <dbReference type="HAMAP-Rule" id="MF_00086"/>
    </source>
</evidence>